<sequence>MNYLIHQLLNAEEINLIKKELDKCSQQDWEDGKKTAGSHASMVKNNLQLNRNTEVSKKNAQLVTKKILSSQLIKSFSLPKKIHGIMFTKSSKNMHYGRHIDNPYMSSGRSDLSFTISLTNKDFYDGGELIIETMNTEEKFKLNPGEIILYPSSYLHAVNEVNNGERLVCVGWIESYVKSTEKREYLFDLDAGARSLLSKHGRSDELDLIFKSYSNLLRDIGE</sequence>
<protein>
    <recommendedName>
        <fullName evidence="1">PKHD-type hydroxylase P9301_13621</fullName>
        <ecNumber evidence="1">1.14.11.-</ecNumber>
    </recommendedName>
</protein>
<dbReference type="EC" id="1.14.11.-" evidence="1"/>
<dbReference type="EMBL" id="CP000576">
    <property type="protein sequence ID" value="ABO17985.1"/>
    <property type="molecule type" value="Genomic_DNA"/>
</dbReference>
<dbReference type="RefSeq" id="WP_011863296.1">
    <property type="nucleotide sequence ID" value="NC_009091.1"/>
</dbReference>
<dbReference type="SMR" id="A3PE10"/>
<dbReference type="STRING" id="167546.P9301_13621"/>
<dbReference type="KEGG" id="pmg:P9301_13621"/>
<dbReference type="eggNOG" id="COG3128">
    <property type="taxonomic scope" value="Bacteria"/>
</dbReference>
<dbReference type="HOGENOM" id="CLU_106663_0_0_3"/>
<dbReference type="OrthoDB" id="9812472at2"/>
<dbReference type="Proteomes" id="UP000001430">
    <property type="component" value="Chromosome"/>
</dbReference>
<dbReference type="GO" id="GO:0016706">
    <property type="term" value="F:2-oxoglutarate-dependent dioxygenase activity"/>
    <property type="evidence" value="ECO:0007669"/>
    <property type="project" value="UniProtKB-UniRule"/>
</dbReference>
<dbReference type="GO" id="GO:0005506">
    <property type="term" value="F:iron ion binding"/>
    <property type="evidence" value="ECO:0007669"/>
    <property type="project" value="UniProtKB-UniRule"/>
</dbReference>
<dbReference type="GO" id="GO:0031418">
    <property type="term" value="F:L-ascorbic acid binding"/>
    <property type="evidence" value="ECO:0007669"/>
    <property type="project" value="UniProtKB-KW"/>
</dbReference>
<dbReference type="GO" id="GO:0006974">
    <property type="term" value="P:DNA damage response"/>
    <property type="evidence" value="ECO:0007669"/>
    <property type="project" value="TreeGrafter"/>
</dbReference>
<dbReference type="GO" id="GO:0006879">
    <property type="term" value="P:intracellular iron ion homeostasis"/>
    <property type="evidence" value="ECO:0007669"/>
    <property type="project" value="TreeGrafter"/>
</dbReference>
<dbReference type="Gene3D" id="2.60.120.620">
    <property type="entry name" value="q2cbj1_9rhob like domain"/>
    <property type="match status" value="1"/>
</dbReference>
<dbReference type="Gene3D" id="4.10.860.20">
    <property type="entry name" value="Rabenosyn, Rab binding domain"/>
    <property type="match status" value="1"/>
</dbReference>
<dbReference type="HAMAP" id="MF_00657">
    <property type="entry name" value="Hydroxyl_YbiX"/>
    <property type="match status" value="1"/>
</dbReference>
<dbReference type="InterPro" id="IPR005123">
    <property type="entry name" value="Oxoglu/Fe-dep_dioxygenase_dom"/>
</dbReference>
<dbReference type="InterPro" id="IPR041097">
    <property type="entry name" value="PKHD_C"/>
</dbReference>
<dbReference type="InterPro" id="IPR023550">
    <property type="entry name" value="PKHD_hydroxylase"/>
</dbReference>
<dbReference type="InterPro" id="IPR006620">
    <property type="entry name" value="Pro_4_hyd_alph"/>
</dbReference>
<dbReference type="InterPro" id="IPR044862">
    <property type="entry name" value="Pro_4_hyd_alph_FE2OG_OXY"/>
</dbReference>
<dbReference type="NCBIfam" id="NF003974">
    <property type="entry name" value="PRK05467.1-3"/>
    <property type="match status" value="1"/>
</dbReference>
<dbReference type="PANTHER" id="PTHR41536">
    <property type="entry name" value="PKHD-TYPE HYDROXYLASE YBIX"/>
    <property type="match status" value="1"/>
</dbReference>
<dbReference type="PANTHER" id="PTHR41536:SF1">
    <property type="entry name" value="PKHD-TYPE HYDROXYLASE YBIX"/>
    <property type="match status" value="1"/>
</dbReference>
<dbReference type="Pfam" id="PF13640">
    <property type="entry name" value="2OG-FeII_Oxy_3"/>
    <property type="match status" value="1"/>
</dbReference>
<dbReference type="Pfam" id="PF18331">
    <property type="entry name" value="PKHD_C"/>
    <property type="match status" value="1"/>
</dbReference>
<dbReference type="SMART" id="SM00702">
    <property type="entry name" value="P4Hc"/>
    <property type="match status" value="1"/>
</dbReference>
<dbReference type="PROSITE" id="PS51471">
    <property type="entry name" value="FE2OG_OXY"/>
    <property type="match status" value="1"/>
</dbReference>
<name>Y1362_PROM0</name>
<reference key="1">
    <citation type="journal article" date="2007" name="PLoS Genet.">
        <title>Patterns and implications of gene gain and loss in the evolution of Prochlorococcus.</title>
        <authorList>
            <person name="Kettler G.C."/>
            <person name="Martiny A.C."/>
            <person name="Huang K."/>
            <person name="Zucker J."/>
            <person name="Coleman M.L."/>
            <person name="Rodrigue S."/>
            <person name="Chen F."/>
            <person name="Lapidus A."/>
            <person name="Ferriera S."/>
            <person name="Johnson J."/>
            <person name="Steglich C."/>
            <person name="Church G.M."/>
            <person name="Richardson P."/>
            <person name="Chisholm S.W."/>
        </authorList>
    </citation>
    <scope>NUCLEOTIDE SEQUENCE [LARGE SCALE GENOMIC DNA]</scope>
    <source>
        <strain>MIT 9301</strain>
    </source>
</reference>
<gene>
    <name type="ordered locus">P9301_13621</name>
</gene>
<proteinExistence type="inferred from homology"/>
<feature type="chain" id="PRO_0000346502" description="PKHD-type hydroxylase P9301_13621">
    <location>
        <begin position="1"/>
        <end position="222"/>
    </location>
</feature>
<feature type="domain" description="Fe2OG dioxygenase" evidence="1">
    <location>
        <begin position="81"/>
        <end position="175"/>
    </location>
</feature>
<feature type="binding site" evidence="1">
    <location>
        <position position="99"/>
    </location>
    <ligand>
        <name>Fe cation</name>
        <dbReference type="ChEBI" id="CHEBI:24875"/>
    </ligand>
</feature>
<feature type="binding site" evidence="1">
    <location>
        <position position="101"/>
    </location>
    <ligand>
        <name>Fe cation</name>
        <dbReference type="ChEBI" id="CHEBI:24875"/>
    </ligand>
</feature>
<feature type="binding site" evidence="1">
    <location>
        <position position="156"/>
    </location>
    <ligand>
        <name>Fe cation</name>
        <dbReference type="ChEBI" id="CHEBI:24875"/>
    </ligand>
</feature>
<feature type="binding site" evidence="1">
    <location>
        <position position="166"/>
    </location>
    <ligand>
        <name>2-oxoglutarate</name>
        <dbReference type="ChEBI" id="CHEBI:16810"/>
    </ligand>
</feature>
<comment type="cofactor">
    <cofactor evidence="1">
        <name>Fe(2+)</name>
        <dbReference type="ChEBI" id="CHEBI:29033"/>
    </cofactor>
    <text evidence="1">Binds 1 Fe(2+) ion per subunit.</text>
</comment>
<comment type="cofactor">
    <cofactor evidence="1">
        <name>L-ascorbate</name>
        <dbReference type="ChEBI" id="CHEBI:38290"/>
    </cofactor>
</comment>
<keyword id="KW-0223">Dioxygenase</keyword>
<keyword id="KW-0408">Iron</keyword>
<keyword id="KW-0479">Metal-binding</keyword>
<keyword id="KW-0560">Oxidoreductase</keyword>
<keyword id="KW-1185">Reference proteome</keyword>
<keyword id="KW-0847">Vitamin C</keyword>
<accession>A3PE10</accession>
<organism>
    <name type="scientific">Prochlorococcus marinus (strain MIT 9301)</name>
    <dbReference type="NCBI Taxonomy" id="167546"/>
    <lineage>
        <taxon>Bacteria</taxon>
        <taxon>Bacillati</taxon>
        <taxon>Cyanobacteriota</taxon>
        <taxon>Cyanophyceae</taxon>
        <taxon>Synechococcales</taxon>
        <taxon>Prochlorococcaceae</taxon>
        <taxon>Prochlorococcus</taxon>
    </lineage>
</organism>
<evidence type="ECO:0000255" key="1">
    <source>
        <dbReference type="HAMAP-Rule" id="MF_00657"/>
    </source>
</evidence>